<feature type="chain" id="PRO_1000077133" description="Arginine repressor">
    <location>
        <begin position="1"/>
        <end position="156"/>
    </location>
</feature>
<reference key="1">
    <citation type="submission" date="2008-01" db="EMBL/GenBank/DDBJ databases">
        <title>Complete sequence of Shewanella halifaxensis HAW-EB4.</title>
        <authorList>
            <consortium name="US DOE Joint Genome Institute"/>
            <person name="Copeland A."/>
            <person name="Lucas S."/>
            <person name="Lapidus A."/>
            <person name="Glavina del Rio T."/>
            <person name="Dalin E."/>
            <person name="Tice H."/>
            <person name="Bruce D."/>
            <person name="Goodwin L."/>
            <person name="Pitluck S."/>
            <person name="Sims D."/>
            <person name="Brettin T."/>
            <person name="Detter J.C."/>
            <person name="Han C."/>
            <person name="Kuske C.R."/>
            <person name="Schmutz J."/>
            <person name="Larimer F."/>
            <person name="Land M."/>
            <person name="Hauser L."/>
            <person name="Kyrpides N."/>
            <person name="Kim E."/>
            <person name="Zhao J.-S."/>
            <person name="Richardson P."/>
        </authorList>
    </citation>
    <scope>NUCLEOTIDE SEQUENCE [LARGE SCALE GENOMIC DNA]</scope>
    <source>
        <strain>HAW-EB4</strain>
    </source>
</reference>
<name>ARGR_SHEHH</name>
<comment type="function">
    <text evidence="1">Regulates arginine biosynthesis genes.</text>
</comment>
<comment type="pathway">
    <text>Amino-acid biosynthesis; L-arginine biosynthesis [regulation].</text>
</comment>
<comment type="subcellular location">
    <subcellularLocation>
        <location evidence="1">Cytoplasm</location>
    </subcellularLocation>
</comment>
<comment type="similarity">
    <text evidence="1">Belongs to the ArgR family.</text>
</comment>
<gene>
    <name evidence="1" type="primary">argR</name>
    <name type="ordered locus">Shal_0902</name>
</gene>
<organism>
    <name type="scientific">Shewanella halifaxensis (strain HAW-EB4)</name>
    <dbReference type="NCBI Taxonomy" id="458817"/>
    <lineage>
        <taxon>Bacteria</taxon>
        <taxon>Pseudomonadati</taxon>
        <taxon>Pseudomonadota</taxon>
        <taxon>Gammaproteobacteria</taxon>
        <taxon>Alteromonadales</taxon>
        <taxon>Shewanellaceae</taxon>
        <taxon>Shewanella</taxon>
    </lineage>
</organism>
<accession>B0TUH7</accession>
<dbReference type="EMBL" id="CP000931">
    <property type="protein sequence ID" value="ABZ75477.1"/>
    <property type="molecule type" value="Genomic_DNA"/>
</dbReference>
<dbReference type="RefSeq" id="WP_012276029.1">
    <property type="nucleotide sequence ID" value="NC_010334.1"/>
</dbReference>
<dbReference type="SMR" id="B0TUH7"/>
<dbReference type="STRING" id="458817.Shal_0902"/>
<dbReference type="KEGG" id="shl:Shal_0902"/>
<dbReference type="eggNOG" id="COG1438">
    <property type="taxonomic scope" value="Bacteria"/>
</dbReference>
<dbReference type="HOGENOM" id="CLU_097103_2_0_6"/>
<dbReference type="OrthoDB" id="7060358at2"/>
<dbReference type="UniPathway" id="UPA00068"/>
<dbReference type="Proteomes" id="UP000001317">
    <property type="component" value="Chromosome"/>
</dbReference>
<dbReference type="GO" id="GO:0005737">
    <property type="term" value="C:cytoplasm"/>
    <property type="evidence" value="ECO:0007669"/>
    <property type="project" value="UniProtKB-SubCell"/>
</dbReference>
<dbReference type="GO" id="GO:0034618">
    <property type="term" value="F:arginine binding"/>
    <property type="evidence" value="ECO:0007669"/>
    <property type="project" value="InterPro"/>
</dbReference>
<dbReference type="GO" id="GO:0003677">
    <property type="term" value="F:DNA binding"/>
    <property type="evidence" value="ECO:0007669"/>
    <property type="project" value="UniProtKB-KW"/>
</dbReference>
<dbReference type="GO" id="GO:0003700">
    <property type="term" value="F:DNA-binding transcription factor activity"/>
    <property type="evidence" value="ECO:0007669"/>
    <property type="project" value="UniProtKB-UniRule"/>
</dbReference>
<dbReference type="GO" id="GO:0006526">
    <property type="term" value="P:L-arginine biosynthetic process"/>
    <property type="evidence" value="ECO:0007669"/>
    <property type="project" value="UniProtKB-UniPathway"/>
</dbReference>
<dbReference type="GO" id="GO:0051259">
    <property type="term" value="P:protein complex oligomerization"/>
    <property type="evidence" value="ECO:0007669"/>
    <property type="project" value="InterPro"/>
</dbReference>
<dbReference type="GO" id="GO:1900079">
    <property type="term" value="P:regulation of arginine biosynthetic process"/>
    <property type="evidence" value="ECO:0007669"/>
    <property type="project" value="UniProtKB-UniRule"/>
</dbReference>
<dbReference type="Gene3D" id="3.30.1360.40">
    <property type="match status" value="1"/>
</dbReference>
<dbReference type="Gene3D" id="1.10.10.10">
    <property type="entry name" value="Winged helix-like DNA-binding domain superfamily/Winged helix DNA-binding domain"/>
    <property type="match status" value="1"/>
</dbReference>
<dbReference type="HAMAP" id="MF_00173">
    <property type="entry name" value="Arg_repressor"/>
    <property type="match status" value="1"/>
</dbReference>
<dbReference type="InterPro" id="IPR001669">
    <property type="entry name" value="Arg_repress"/>
</dbReference>
<dbReference type="InterPro" id="IPR020899">
    <property type="entry name" value="Arg_repress_C"/>
</dbReference>
<dbReference type="InterPro" id="IPR036251">
    <property type="entry name" value="Arg_repress_C_sf"/>
</dbReference>
<dbReference type="InterPro" id="IPR020900">
    <property type="entry name" value="Arg_repress_DNA-bd"/>
</dbReference>
<dbReference type="InterPro" id="IPR036388">
    <property type="entry name" value="WH-like_DNA-bd_sf"/>
</dbReference>
<dbReference type="InterPro" id="IPR036390">
    <property type="entry name" value="WH_DNA-bd_sf"/>
</dbReference>
<dbReference type="NCBIfam" id="TIGR01529">
    <property type="entry name" value="argR_whole"/>
    <property type="match status" value="1"/>
</dbReference>
<dbReference type="NCBIfam" id="NF003457">
    <property type="entry name" value="PRK05066.1"/>
    <property type="match status" value="1"/>
</dbReference>
<dbReference type="PANTHER" id="PTHR34471">
    <property type="entry name" value="ARGININE REPRESSOR"/>
    <property type="match status" value="1"/>
</dbReference>
<dbReference type="PANTHER" id="PTHR34471:SF1">
    <property type="entry name" value="ARGININE REPRESSOR"/>
    <property type="match status" value="1"/>
</dbReference>
<dbReference type="Pfam" id="PF01316">
    <property type="entry name" value="Arg_repressor"/>
    <property type="match status" value="1"/>
</dbReference>
<dbReference type="Pfam" id="PF02863">
    <property type="entry name" value="Arg_repressor_C"/>
    <property type="match status" value="1"/>
</dbReference>
<dbReference type="PRINTS" id="PR01467">
    <property type="entry name" value="ARGREPRESSOR"/>
</dbReference>
<dbReference type="SUPFAM" id="SSF55252">
    <property type="entry name" value="C-terminal domain of arginine repressor"/>
    <property type="match status" value="1"/>
</dbReference>
<dbReference type="SUPFAM" id="SSF46785">
    <property type="entry name" value="Winged helix' DNA-binding domain"/>
    <property type="match status" value="1"/>
</dbReference>
<sequence length="156" mass="16895">MQATKSPDDLVKTFKSILKEERFGSQSEIVTALQAEGFSNINQSKVSRMLSKFGAVRTRNAKQEMVYCLPAELGVPTAGSPLKNLVLDVDHNQAMIVVRTSPGAAQLIARLLDSIGKPEGILGTIAGDDTIFICPSSIHNIEDTLETVKSLFNYAD</sequence>
<protein>
    <recommendedName>
        <fullName evidence="1">Arginine repressor</fullName>
    </recommendedName>
</protein>
<proteinExistence type="inferred from homology"/>
<evidence type="ECO:0000255" key="1">
    <source>
        <dbReference type="HAMAP-Rule" id="MF_00173"/>
    </source>
</evidence>
<keyword id="KW-0028">Amino-acid biosynthesis</keyword>
<keyword id="KW-0055">Arginine biosynthesis</keyword>
<keyword id="KW-0963">Cytoplasm</keyword>
<keyword id="KW-0238">DNA-binding</keyword>
<keyword id="KW-0678">Repressor</keyword>
<keyword id="KW-0804">Transcription</keyword>
<keyword id="KW-0805">Transcription regulation</keyword>